<sequence length="551" mass="60293">MGVQTCAVAGRGVVAYLLAMTAAQNDRSASTPSVASAHDKILIVDFGSQVTQLIARRVREDGVYCEIVPFNKAEEAFKEMKPKAVILSGGPESVHEAGSPRAPQLIFASGVPVMGICYGQMTMAAQLGGEVEGGHHREFGRADVEVKAQSKLFEDVWSSGSKNQVWMSHGDRITKMPPGFSVAGTSPNAPFAIIQDEKRKYYGLMFHPEVVHTPDGAKLIRNFVRKIAGLTGDWTMRAFREEEIAKIRAQVGKGKVICGLSGGVDSAVAAVLIHEAIGDQLTCVFVDHGLMRLNEAEQVVDLFRHHYNIPLVHVDASKQFLGELEGVTDPETKRKTIGRLFIEVFEAEAKKIGGADFLAQGTLYPDVIESVSFTGGPSVTIKSHHNVGGLPERMNMKLVEPLRELFKDEVRKLGRELGLPEIFVGRHPFPGPGLAIRCPGDITSDKLDILRKADAVYIDQIRKHGLYDDIWQAFAVLLPVKTVGVMGDGRTYDYVVGLRAVTSTDGMTADFYQFDMKFLGETATRIINEVKGVNRVVYDVTSKPPGTIEWE</sequence>
<gene>
    <name evidence="1" type="primary">guaA</name>
    <name type="ordered locus">blr3989</name>
</gene>
<reference key="1">
    <citation type="journal article" date="2002" name="DNA Res.">
        <title>Complete genomic sequence of nitrogen-fixing symbiotic bacterium Bradyrhizobium japonicum USDA110.</title>
        <authorList>
            <person name="Kaneko T."/>
            <person name="Nakamura Y."/>
            <person name="Sato S."/>
            <person name="Minamisawa K."/>
            <person name="Uchiumi T."/>
            <person name="Sasamoto S."/>
            <person name="Watanabe A."/>
            <person name="Idesawa K."/>
            <person name="Iriguchi M."/>
            <person name="Kawashima K."/>
            <person name="Kohara M."/>
            <person name="Matsumoto M."/>
            <person name="Shimpo S."/>
            <person name="Tsuruoka H."/>
            <person name="Wada T."/>
            <person name="Yamada M."/>
            <person name="Tabata S."/>
        </authorList>
    </citation>
    <scope>NUCLEOTIDE SEQUENCE [LARGE SCALE GENOMIC DNA]</scope>
    <source>
        <strain>JCM 10833 / BCRC 13528 / IAM 13628 / NBRC 14792 / USDA 110</strain>
    </source>
</reference>
<dbReference type="EC" id="6.3.5.2" evidence="1"/>
<dbReference type="EMBL" id="BA000040">
    <property type="protein sequence ID" value="BAC49254.1"/>
    <property type="molecule type" value="Genomic_DNA"/>
</dbReference>
<dbReference type="RefSeq" id="NP_770629.1">
    <property type="nucleotide sequence ID" value="NC_004463.1"/>
</dbReference>
<dbReference type="SMR" id="Q89N53"/>
<dbReference type="FunCoup" id="Q89N53">
    <property type="interactions" value="717"/>
</dbReference>
<dbReference type="STRING" id="224911.AAV28_16965"/>
<dbReference type="EnsemblBacteria" id="BAC49254">
    <property type="protein sequence ID" value="BAC49254"/>
    <property type="gene ID" value="BAC49254"/>
</dbReference>
<dbReference type="KEGG" id="bja:blr3989"/>
<dbReference type="PATRIC" id="fig|224911.5.peg.3996"/>
<dbReference type="eggNOG" id="COG0518">
    <property type="taxonomic scope" value="Bacteria"/>
</dbReference>
<dbReference type="eggNOG" id="COG0519">
    <property type="taxonomic scope" value="Bacteria"/>
</dbReference>
<dbReference type="HOGENOM" id="CLU_014340_0_5_5"/>
<dbReference type="InParanoid" id="Q89N53"/>
<dbReference type="OrthoDB" id="9802219at2"/>
<dbReference type="PhylomeDB" id="Q89N53"/>
<dbReference type="UniPathway" id="UPA00189">
    <property type="reaction ID" value="UER00296"/>
</dbReference>
<dbReference type="Proteomes" id="UP000002526">
    <property type="component" value="Chromosome"/>
</dbReference>
<dbReference type="GO" id="GO:0005829">
    <property type="term" value="C:cytosol"/>
    <property type="evidence" value="ECO:0000318"/>
    <property type="project" value="GO_Central"/>
</dbReference>
<dbReference type="GO" id="GO:0005524">
    <property type="term" value="F:ATP binding"/>
    <property type="evidence" value="ECO:0007669"/>
    <property type="project" value="UniProtKB-UniRule"/>
</dbReference>
<dbReference type="GO" id="GO:0003921">
    <property type="term" value="F:GMP synthase activity"/>
    <property type="evidence" value="ECO:0000318"/>
    <property type="project" value="GO_Central"/>
</dbReference>
<dbReference type="GO" id="GO:0006177">
    <property type="term" value="P:GMP biosynthetic process"/>
    <property type="evidence" value="ECO:0000318"/>
    <property type="project" value="GO_Central"/>
</dbReference>
<dbReference type="CDD" id="cd01742">
    <property type="entry name" value="GATase1_GMP_Synthase"/>
    <property type="match status" value="1"/>
</dbReference>
<dbReference type="CDD" id="cd01997">
    <property type="entry name" value="GMP_synthase_C"/>
    <property type="match status" value="1"/>
</dbReference>
<dbReference type="FunFam" id="3.30.300.10:FF:000002">
    <property type="entry name" value="GMP synthase [glutamine-hydrolyzing]"/>
    <property type="match status" value="1"/>
</dbReference>
<dbReference type="FunFam" id="3.40.50.620:FF:000001">
    <property type="entry name" value="GMP synthase [glutamine-hydrolyzing]"/>
    <property type="match status" value="1"/>
</dbReference>
<dbReference type="FunFam" id="3.40.50.880:FF:000001">
    <property type="entry name" value="GMP synthase [glutamine-hydrolyzing]"/>
    <property type="match status" value="1"/>
</dbReference>
<dbReference type="Gene3D" id="3.30.300.10">
    <property type="match status" value="1"/>
</dbReference>
<dbReference type="Gene3D" id="3.40.50.880">
    <property type="match status" value="1"/>
</dbReference>
<dbReference type="Gene3D" id="3.40.50.620">
    <property type="entry name" value="HUPs"/>
    <property type="match status" value="1"/>
</dbReference>
<dbReference type="HAMAP" id="MF_00344">
    <property type="entry name" value="GMP_synthase"/>
    <property type="match status" value="1"/>
</dbReference>
<dbReference type="InterPro" id="IPR029062">
    <property type="entry name" value="Class_I_gatase-like"/>
</dbReference>
<dbReference type="InterPro" id="IPR017926">
    <property type="entry name" value="GATASE"/>
</dbReference>
<dbReference type="InterPro" id="IPR001674">
    <property type="entry name" value="GMP_synth_C"/>
</dbReference>
<dbReference type="InterPro" id="IPR004739">
    <property type="entry name" value="GMP_synth_GATase"/>
</dbReference>
<dbReference type="InterPro" id="IPR022955">
    <property type="entry name" value="GMP_synthase"/>
</dbReference>
<dbReference type="InterPro" id="IPR025777">
    <property type="entry name" value="GMPS_ATP_PPase_dom"/>
</dbReference>
<dbReference type="InterPro" id="IPR022310">
    <property type="entry name" value="NAD/GMP_synthase"/>
</dbReference>
<dbReference type="InterPro" id="IPR014729">
    <property type="entry name" value="Rossmann-like_a/b/a_fold"/>
</dbReference>
<dbReference type="NCBIfam" id="TIGR00884">
    <property type="entry name" value="guaA_Cterm"/>
    <property type="match status" value="1"/>
</dbReference>
<dbReference type="NCBIfam" id="TIGR00888">
    <property type="entry name" value="guaA_Nterm"/>
    <property type="match status" value="1"/>
</dbReference>
<dbReference type="NCBIfam" id="NF000848">
    <property type="entry name" value="PRK00074.1"/>
    <property type="match status" value="1"/>
</dbReference>
<dbReference type="PANTHER" id="PTHR11922:SF2">
    <property type="entry name" value="GMP SYNTHASE [GLUTAMINE-HYDROLYZING]"/>
    <property type="match status" value="1"/>
</dbReference>
<dbReference type="PANTHER" id="PTHR11922">
    <property type="entry name" value="GMP SYNTHASE-RELATED"/>
    <property type="match status" value="1"/>
</dbReference>
<dbReference type="Pfam" id="PF00117">
    <property type="entry name" value="GATase"/>
    <property type="match status" value="1"/>
</dbReference>
<dbReference type="Pfam" id="PF00958">
    <property type="entry name" value="GMP_synt_C"/>
    <property type="match status" value="1"/>
</dbReference>
<dbReference type="Pfam" id="PF02540">
    <property type="entry name" value="NAD_synthase"/>
    <property type="match status" value="1"/>
</dbReference>
<dbReference type="PRINTS" id="PR00096">
    <property type="entry name" value="GATASE"/>
</dbReference>
<dbReference type="SUPFAM" id="SSF52402">
    <property type="entry name" value="Adenine nucleotide alpha hydrolases-like"/>
    <property type="match status" value="1"/>
</dbReference>
<dbReference type="SUPFAM" id="SSF52317">
    <property type="entry name" value="Class I glutamine amidotransferase-like"/>
    <property type="match status" value="1"/>
</dbReference>
<dbReference type="SUPFAM" id="SSF54810">
    <property type="entry name" value="GMP synthetase C-terminal dimerisation domain"/>
    <property type="match status" value="1"/>
</dbReference>
<dbReference type="PROSITE" id="PS51273">
    <property type="entry name" value="GATASE_TYPE_1"/>
    <property type="match status" value="1"/>
</dbReference>
<dbReference type="PROSITE" id="PS51553">
    <property type="entry name" value="GMPS_ATP_PPASE"/>
    <property type="match status" value="1"/>
</dbReference>
<feature type="chain" id="PRO_0000140102" description="GMP synthase [glutamine-hydrolyzing]">
    <location>
        <begin position="1"/>
        <end position="551"/>
    </location>
</feature>
<feature type="domain" description="Glutamine amidotransferase type-1" evidence="1">
    <location>
        <begin position="40"/>
        <end position="233"/>
    </location>
</feature>
<feature type="domain" description="GMPS ATP-PPase" evidence="1">
    <location>
        <begin position="234"/>
        <end position="426"/>
    </location>
</feature>
<feature type="active site" description="Nucleophile" evidence="1">
    <location>
        <position position="117"/>
    </location>
</feature>
<feature type="active site" evidence="1">
    <location>
        <position position="207"/>
    </location>
</feature>
<feature type="active site" evidence="1">
    <location>
        <position position="209"/>
    </location>
</feature>
<feature type="binding site" evidence="1">
    <location>
        <begin position="261"/>
        <end position="267"/>
    </location>
    <ligand>
        <name>ATP</name>
        <dbReference type="ChEBI" id="CHEBI:30616"/>
    </ligand>
</feature>
<name>GUAA_BRADU</name>
<evidence type="ECO:0000255" key="1">
    <source>
        <dbReference type="HAMAP-Rule" id="MF_00344"/>
    </source>
</evidence>
<proteinExistence type="inferred from homology"/>
<accession>Q89N53</accession>
<protein>
    <recommendedName>
        <fullName evidence="1">GMP synthase [glutamine-hydrolyzing]</fullName>
        <ecNumber evidence="1">6.3.5.2</ecNumber>
    </recommendedName>
    <alternativeName>
        <fullName evidence="1">GMP synthetase</fullName>
    </alternativeName>
    <alternativeName>
        <fullName evidence="1">Glutamine amidotransferase</fullName>
    </alternativeName>
</protein>
<organism>
    <name type="scientific">Bradyrhizobium diazoefficiens (strain JCM 10833 / BCRC 13528 / IAM 13628 / NBRC 14792 / USDA 110)</name>
    <dbReference type="NCBI Taxonomy" id="224911"/>
    <lineage>
        <taxon>Bacteria</taxon>
        <taxon>Pseudomonadati</taxon>
        <taxon>Pseudomonadota</taxon>
        <taxon>Alphaproteobacteria</taxon>
        <taxon>Hyphomicrobiales</taxon>
        <taxon>Nitrobacteraceae</taxon>
        <taxon>Bradyrhizobium</taxon>
    </lineage>
</organism>
<comment type="function">
    <text evidence="1">Catalyzes the synthesis of GMP from XMP.</text>
</comment>
<comment type="catalytic activity">
    <reaction evidence="1">
        <text>XMP + L-glutamine + ATP + H2O = GMP + L-glutamate + AMP + diphosphate + 2 H(+)</text>
        <dbReference type="Rhea" id="RHEA:11680"/>
        <dbReference type="ChEBI" id="CHEBI:15377"/>
        <dbReference type="ChEBI" id="CHEBI:15378"/>
        <dbReference type="ChEBI" id="CHEBI:29985"/>
        <dbReference type="ChEBI" id="CHEBI:30616"/>
        <dbReference type="ChEBI" id="CHEBI:33019"/>
        <dbReference type="ChEBI" id="CHEBI:57464"/>
        <dbReference type="ChEBI" id="CHEBI:58115"/>
        <dbReference type="ChEBI" id="CHEBI:58359"/>
        <dbReference type="ChEBI" id="CHEBI:456215"/>
        <dbReference type="EC" id="6.3.5.2"/>
    </reaction>
</comment>
<comment type="pathway">
    <text evidence="1">Purine metabolism; GMP biosynthesis; GMP from XMP (L-Gln route): step 1/1.</text>
</comment>
<comment type="subunit">
    <text evidence="1">Homodimer.</text>
</comment>
<keyword id="KW-0067">ATP-binding</keyword>
<keyword id="KW-0315">Glutamine amidotransferase</keyword>
<keyword id="KW-0332">GMP biosynthesis</keyword>
<keyword id="KW-0436">Ligase</keyword>
<keyword id="KW-0547">Nucleotide-binding</keyword>
<keyword id="KW-0658">Purine biosynthesis</keyword>
<keyword id="KW-1185">Reference proteome</keyword>